<gene>
    <name evidence="9" type="primary">Snx21</name>
</gene>
<protein>
    <recommendedName>
        <fullName evidence="7">Sorting nexin-21</fullName>
    </recommendedName>
</protein>
<evidence type="ECO:0000250" key="1"/>
<evidence type="ECO:0000250" key="2">
    <source>
        <dbReference type="UniProtKB" id="Q6P4T1"/>
    </source>
</evidence>
<evidence type="ECO:0000250" key="3">
    <source>
        <dbReference type="UniProtKB" id="Q96L94"/>
    </source>
</evidence>
<evidence type="ECO:0000255" key="4">
    <source>
        <dbReference type="PROSITE-ProRule" id="PRU00147"/>
    </source>
</evidence>
<evidence type="ECO:0000256" key="5">
    <source>
        <dbReference type="SAM" id="MobiDB-lite"/>
    </source>
</evidence>
<evidence type="ECO:0000269" key="6">
    <source>
    </source>
</evidence>
<evidence type="ECO:0000305" key="7"/>
<evidence type="ECO:0000305" key="8">
    <source>
    </source>
</evidence>
<evidence type="ECO:0000312" key="9">
    <source>
        <dbReference type="MGI" id="MGI:1917729"/>
    </source>
</evidence>
<evidence type="ECO:0007744" key="10">
    <source>
        <dbReference type="PDB" id="4YMR"/>
    </source>
</evidence>
<evidence type="ECO:0007829" key="11">
    <source>
        <dbReference type="PDB" id="4YMR"/>
    </source>
</evidence>
<dbReference type="EMBL" id="AL591127">
    <property type="status" value="NOT_ANNOTATED_CDS"/>
    <property type="molecule type" value="Genomic_DNA"/>
</dbReference>
<dbReference type="EMBL" id="AK141663">
    <property type="protein sequence ID" value="BAE24791.1"/>
    <property type="molecule type" value="mRNA"/>
</dbReference>
<dbReference type="CCDS" id="CCDS38328.1"/>
<dbReference type="RefSeq" id="NP_598685.2">
    <property type="nucleotide sequence ID" value="NM_133924.4"/>
</dbReference>
<dbReference type="PDB" id="4YMR">
    <property type="method" value="X-ray"/>
    <property type="resolution" value="2.40 A"/>
    <property type="chains" value="A/B=230-363"/>
</dbReference>
<dbReference type="PDBsum" id="4YMR"/>
<dbReference type="SMR" id="Q3UR97"/>
<dbReference type="FunCoup" id="Q3UR97">
    <property type="interactions" value="193"/>
</dbReference>
<dbReference type="STRING" id="10090.ENSMUSP00000054137"/>
<dbReference type="iPTMnet" id="Q3UR97"/>
<dbReference type="PhosphoSitePlus" id="Q3UR97"/>
<dbReference type="PaxDb" id="10090-ENSMUSP00000054137"/>
<dbReference type="PeptideAtlas" id="Q3UR97"/>
<dbReference type="ProteomicsDB" id="261541"/>
<dbReference type="Pumba" id="Q3UR97"/>
<dbReference type="Antibodypedia" id="27775">
    <property type="antibodies" value="82 antibodies from 16 providers"/>
</dbReference>
<dbReference type="DNASU" id="101113"/>
<dbReference type="Ensembl" id="ENSMUST00000056181.7">
    <property type="protein sequence ID" value="ENSMUSP00000054137.7"/>
    <property type="gene ID" value="ENSMUSG00000050373.14"/>
</dbReference>
<dbReference type="GeneID" id="101113"/>
<dbReference type="KEGG" id="mmu:101113"/>
<dbReference type="UCSC" id="uc008nwc.1">
    <property type="organism name" value="mouse"/>
</dbReference>
<dbReference type="AGR" id="MGI:1917729"/>
<dbReference type="CTD" id="90203"/>
<dbReference type="MGI" id="MGI:1917729">
    <property type="gene designation" value="Snx21"/>
</dbReference>
<dbReference type="VEuPathDB" id="HostDB:ENSMUSG00000050373"/>
<dbReference type="eggNOG" id="KOG2101">
    <property type="taxonomic scope" value="Eukaryota"/>
</dbReference>
<dbReference type="GeneTree" id="ENSGT00530000063759"/>
<dbReference type="HOGENOM" id="CLU_059132_0_0_1"/>
<dbReference type="InParanoid" id="Q3UR97"/>
<dbReference type="OMA" id="DQMERVC"/>
<dbReference type="OrthoDB" id="5975050at2759"/>
<dbReference type="PhylomeDB" id="Q3UR97"/>
<dbReference type="TreeFam" id="TF326807"/>
<dbReference type="BioGRID-ORCS" id="101113">
    <property type="hits" value="1 hit in 76 CRISPR screens"/>
</dbReference>
<dbReference type="ChiTaRS" id="Snx21">
    <property type="organism name" value="mouse"/>
</dbReference>
<dbReference type="EvolutionaryTrace" id="Q3UR97"/>
<dbReference type="PRO" id="PR:Q3UR97"/>
<dbReference type="Proteomes" id="UP000000589">
    <property type="component" value="Chromosome 2"/>
</dbReference>
<dbReference type="RNAct" id="Q3UR97">
    <property type="molecule type" value="protein"/>
</dbReference>
<dbReference type="Bgee" id="ENSMUSG00000050373">
    <property type="expression patterns" value="Expressed in hindlimb stylopod muscle and 203 other cell types or tissues"/>
</dbReference>
<dbReference type="ExpressionAtlas" id="Q3UR97">
    <property type="expression patterns" value="baseline and differential"/>
</dbReference>
<dbReference type="GO" id="GO:0031901">
    <property type="term" value="C:early endosome membrane"/>
    <property type="evidence" value="ECO:0000314"/>
    <property type="project" value="UniProtKB"/>
</dbReference>
<dbReference type="GO" id="GO:0032266">
    <property type="term" value="F:phosphatidylinositol-3-phosphate binding"/>
    <property type="evidence" value="ECO:0000314"/>
    <property type="project" value="UniProtKB"/>
</dbReference>
<dbReference type="GO" id="GO:0005546">
    <property type="term" value="F:phosphatidylinositol-4,5-bisphosphate binding"/>
    <property type="evidence" value="ECO:0000314"/>
    <property type="project" value="UniProtKB"/>
</dbReference>
<dbReference type="GO" id="GO:0015031">
    <property type="term" value="P:protein transport"/>
    <property type="evidence" value="ECO:0007669"/>
    <property type="project" value="UniProtKB-KW"/>
</dbReference>
<dbReference type="FunFam" id="3.30.1520.10:FF:000025">
    <property type="entry name" value="Sorting nexin 20"/>
    <property type="match status" value="1"/>
</dbReference>
<dbReference type="Gene3D" id="3.30.1520.10">
    <property type="entry name" value="Phox-like domain"/>
    <property type="match status" value="1"/>
</dbReference>
<dbReference type="InterPro" id="IPR001683">
    <property type="entry name" value="PX_dom"/>
</dbReference>
<dbReference type="InterPro" id="IPR036871">
    <property type="entry name" value="PX_dom_sf"/>
</dbReference>
<dbReference type="InterPro" id="IPR039937">
    <property type="entry name" value="SNX20/SNX21"/>
</dbReference>
<dbReference type="InterPro" id="IPR011990">
    <property type="entry name" value="TPR-like_helical_dom_sf"/>
</dbReference>
<dbReference type="PANTHER" id="PTHR20939">
    <property type="entry name" value="SORTING NEXIN 20, 21"/>
    <property type="match status" value="1"/>
</dbReference>
<dbReference type="PANTHER" id="PTHR20939:SF10">
    <property type="entry name" value="SORTING NEXIN-21"/>
    <property type="match status" value="1"/>
</dbReference>
<dbReference type="Pfam" id="PF00787">
    <property type="entry name" value="PX"/>
    <property type="match status" value="1"/>
</dbReference>
<dbReference type="SMART" id="SM00312">
    <property type="entry name" value="PX"/>
    <property type="match status" value="1"/>
</dbReference>
<dbReference type="SUPFAM" id="SSF64268">
    <property type="entry name" value="PX domain"/>
    <property type="match status" value="1"/>
</dbReference>
<dbReference type="SUPFAM" id="SSF48452">
    <property type="entry name" value="TPR-like"/>
    <property type="match status" value="1"/>
</dbReference>
<dbReference type="PROSITE" id="PS50195">
    <property type="entry name" value="PX"/>
    <property type="match status" value="1"/>
</dbReference>
<name>SNX21_MOUSE</name>
<keyword id="KW-0002">3D-structure</keyword>
<keyword id="KW-0968">Cytoplasmic vesicle</keyword>
<keyword id="KW-0967">Endosome</keyword>
<keyword id="KW-0446">Lipid-binding</keyword>
<keyword id="KW-0472">Membrane</keyword>
<keyword id="KW-0653">Protein transport</keyword>
<keyword id="KW-1185">Reference proteome</keyword>
<keyword id="KW-0813">Transport</keyword>
<feature type="chain" id="PRO_0000434600" description="Sorting nexin-21">
    <location>
        <begin position="1"/>
        <end position="363"/>
    </location>
</feature>
<feature type="domain" description="PX" evidence="4">
    <location>
        <begin position="119"/>
        <end position="236"/>
    </location>
</feature>
<feature type="region of interest" description="Disordered" evidence="5">
    <location>
        <begin position="1"/>
        <end position="99"/>
    </location>
</feature>
<feature type="compositionally biased region" description="Basic residues" evidence="5">
    <location>
        <begin position="1"/>
        <end position="11"/>
    </location>
</feature>
<feature type="compositionally biased region" description="Low complexity" evidence="5">
    <location>
        <begin position="12"/>
        <end position="28"/>
    </location>
</feature>
<feature type="compositionally biased region" description="Polar residues" evidence="5">
    <location>
        <begin position="46"/>
        <end position="56"/>
    </location>
</feature>
<feature type="compositionally biased region" description="Acidic residues" evidence="5">
    <location>
        <begin position="57"/>
        <end position="71"/>
    </location>
</feature>
<feature type="binding site" evidence="8">
    <location>
        <position position="161"/>
    </location>
    <ligand>
        <name>a 1,2-diacyl-sn-glycero-3-phospho-(1D-myo-inositol-3-phosphate)</name>
        <dbReference type="ChEBI" id="CHEBI:58088"/>
    </ligand>
</feature>
<feature type="binding site" evidence="3">
    <location>
        <position position="163"/>
    </location>
    <ligand>
        <name>a 1,2-diacyl-sn-glycero-3-phospho-(1D-myo-inositol-3-phosphate)</name>
        <dbReference type="ChEBI" id="CHEBI:58088"/>
    </ligand>
</feature>
<feature type="binding site" evidence="3">
    <location>
        <position position="188"/>
    </location>
    <ligand>
        <name>a 1,2-diacyl-sn-glycero-3-phospho-(1D-myo-inositol-3-phosphate)</name>
        <dbReference type="ChEBI" id="CHEBI:58088"/>
    </ligand>
</feature>
<feature type="binding site" evidence="2">
    <location>
        <position position="202"/>
    </location>
    <ligand>
        <name>a 1,2-diacyl-sn-glycero-3-phospho-(1D-myo-inositol-3-phosphate)</name>
        <dbReference type="ChEBI" id="CHEBI:58088"/>
    </ligand>
</feature>
<feature type="mutagenesis site" description="Abolishes location on endosome membranes. Abolishes binding to membranes enriched in phosphatidylinositol 3-phosphate. No significant effect on binding to membranes enriched in phosphatidylinositol 4,5-bisphosphate." evidence="6">
    <original>R</original>
    <variation>Q</variation>
    <location>
        <position position="161"/>
    </location>
</feature>
<feature type="helix" evidence="11">
    <location>
        <begin position="231"/>
        <end position="243"/>
    </location>
</feature>
<feature type="helix" evidence="11">
    <location>
        <begin position="246"/>
        <end position="262"/>
    </location>
</feature>
<feature type="strand" evidence="11">
    <location>
        <begin position="263"/>
        <end position="265"/>
    </location>
</feature>
<feature type="helix" evidence="11">
    <location>
        <begin position="271"/>
        <end position="285"/>
    </location>
</feature>
<feature type="helix" evidence="11">
    <location>
        <begin position="289"/>
        <end position="304"/>
    </location>
</feature>
<feature type="helix" evidence="11">
    <location>
        <begin position="312"/>
        <end position="325"/>
    </location>
</feature>
<feature type="helix" evidence="11">
    <location>
        <begin position="331"/>
        <end position="341"/>
    </location>
</feature>
<feature type="turn" evidence="11">
    <location>
        <begin position="342"/>
        <end position="344"/>
    </location>
</feature>
<feature type="helix" evidence="11">
    <location>
        <begin position="353"/>
        <end position="359"/>
    </location>
</feature>
<comment type="function">
    <text evidence="6 7">Binds to membranes enriched in phosphatidylinositol 3-phosphate (PtdIns(P3)) and phosphatidylinositol 4,5-bisphosphate (PubMed:25882846). May be involved in several stages of intracellular trafficking.</text>
</comment>
<comment type="subunit">
    <text evidence="6">Monomer.</text>
</comment>
<comment type="subcellular location">
    <subcellularLocation>
        <location evidence="8">Cytoplasmic vesicle membrane</location>
        <topology evidence="1">Peripheral membrane protein</topology>
        <orientation evidence="1">Cytoplasmic side</orientation>
    </subcellularLocation>
    <subcellularLocation>
        <location evidence="6">Early endosome membrane</location>
        <topology evidence="6">Peripheral membrane protein</topology>
        <orientation evidence="6">Cytoplasmic side</orientation>
    </subcellularLocation>
</comment>
<comment type="domain">
    <text evidence="6">The PX domain mediates specific binding to membranes enriched in phosphatidylinositol 3-phosphate (PtdIns(P3)).</text>
</comment>
<comment type="similarity">
    <text evidence="7">Belongs to the sorting nexin family.</text>
</comment>
<organism>
    <name type="scientific">Mus musculus</name>
    <name type="common">Mouse</name>
    <dbReference type="NCBI Taxonomy" id="10090"/>
    <lineage>
        <taxon>Eukaryota</taxon>
        <taxon>Metazoa</taxon>
        <taxon>Chordata</taxon>
        <taxon>Craniata</taxon>
        <taxon>Vertebrata</taxon>
        <taxon>Euteleostomi</taxon>
        <taxon>Mammalia</taxon>
        <taxon>Eutheria</taxon>
        <taxon>Euarchontoglires</taxon>
        <taxon>Glires</taxon>
        <taxon>Rodentia</taxon>
        <taxon>Myomorpha</taxon>
        <taxon>Muroidea</taxon>
        <taxon>Muridae</taxon>
        <taxon>Murinae</taxon>
        <taxon>Mus</taxon>
        <taxon>Mus</taxon>
    </lineage>
</organism>
<reference key="1">
    <citation type="journal article" date="2005" name="Science">
        <title>The transcriptional landscape of the mammalian genome.</title>
        <authorList>
            <person name="Carninci P."/>
            <person name="Kasukawa T."/>
            <person name="Katayama S."/>
            <person name="Gough J."/>
            <person name="Frith M.C."/>
            <person name="Maeda N."/>
            <person name="Oyama R."/>
            <person name="Ravasi T."/>
            <person name="Lenhard B."/>
            <person name="Wells C."/>
            <person name="Kodzius R."/>
            <person name="Shimokawa K."/>
            <person name="Bajic V.B."/>
            <person name="Brenner S.E."/>
            <person name="Batalov S."/>
            <person name="Forrest A.R."/>
            <person name="Zavolan M."/>
            <person name="Davis M.J."/>
            <person name="Wilming L.G."/>
            <person name="Aidinis V."/>
            <person name="Allen J.E."/>
            <person name="Ambesi-Impiombato A."/>
            <person name="Apweiler R."/>
            <person name="Aturaliya R.N."/>
            <person name="Bailey T.L."/>
            <person name="Bansal M."/>
            <person name="Baxter L."/>
            <person name="Beisel K.W."/>
            <person name="Bersano T."/>
            <person name="Bono H."/>
            <person name="Chalk A.M."/>
            <person name="Chiu K.P."/>
            <person name="Choudhary V."/>
            <person name="Christoffels A."/>
            <person name="Clutterbuck D.R."/>
            <person name="Crowe M.L."/>
            <person name="Dalla E."/>
            <person name="Dalrymple B.P."/>
            <person name="de Bono B."/>
            <person name="Della Gatta G."/>
            <person name="di Bernardo D."/>
            <person name="Down T."/>
            <person name="Engstrom P."/>
            <person name="Fagiolini M."/>
            <person name="Faulkner G."/>
            <person name="Fletcher C.F."/>
            <person name="Fukushima T."/>
            <person name="Furuno M."/>
            <person name="Futaki S."/>
            <person name="Gariboldi M."/>
            <person name="Georgii-Hemming P."/>
            <person name="Gingeras T.R."/>
            <person name="Gojobori T."/>
            <person name="Green R.E."/>
            <person name="Gustincich S."/>
            <person name="Harbers M."/>
            <person name="Hayashi Y."/>
            <person name="Hensch T.K."/>
            <person name="Hirokawa N."/>
            <person name="Hill D."/>
            <person name="Huminiecki L."/>
            <person name="Iacono M."/>
            <person name="Ikeo K."/>
            <person name="Iwama A."/>
            <person name="Ishikawa T."/>
            <person name="Jakt M."/>
            <person name="Kanapin A."/>
            <person name="Katoh M."/>
            <person name="Kawasawa Y."/>
            <person name="Kelso J."/>
            <person name="Kitamura H."/>
            <person name="Kitano H."/>
            <person name="Kollias G."/>
            <person name="Krishnan S.P."/>
            <person name="Kruger A."/>
            <person name="Kummerfeld S.K."/>
            <person name="Kurochkin I.V."/>
            <person name="Lareau L.F."/>
            <person name="Lazarevic D."/>
            <person name="Lipovich L."/>
            <person name="Liu J."/>
            <person name="Liuni S."/>
            <person name="McWilliam S."/>
            <person name="Madan Babu M."/>
            <person name="Madera M."/>
            <person name="Marchionni L."/>
            <person name="Matsuda H."/>
            <person name="Matsuzawa S."/>
            <person name="Miki H."/>
            <person name="Mignone F."/>
            <person name="Miyake S."/>
            <person name="Morris K."/>
            <person name="Mottagui-Tabar S."/>
            <person name="Mulder N."/>
            <person name="Nakano N."/>
            <person name="Nakauchi H."/>
            <person name="Ng P."/>
            <person name="Nilsson R."/>
            <person name="Nishiguchi S."/>
            <person name="Nishikawa S."/>
            <person name="Nori F."/>
            <person name="Ohara O."/>
            <person name="Okazaki Y."/>
            <person name="Orlando V."/>
            <person name="Pang K.C."/>
            <person name="Pavan W.J."/>
            <person name="Pavesi G."/>
            <person name="Pesole G."/>
            <person name="Petrovsky N."/>
            <person name="Piazza S."/>
            <person name="Reed J."/>
            <person name="Reid J.F."/>
            <person name="Ring B.Z."/>
            <person name="Ringwald M."/>
            <person name="Rost B."/>
            <person name="Ruan Y."/>
            <person name="Salzberg S.L."/>
            <person name="Sandelin A."/>
            <person name="Schneider C."/>
            <person name="Schoenbach C."/>
            <person name="Sekiguchi K."/>
            <person name="Semple C.A."/>
            <person name="Seno S."/>
            <person name="Sessa L."/>
            <person name="Sheng Y."/>
            <person name="Shibata Y."/>
            <person name="Shimada H."/>
            <person name="Shimada K."/>
            <person name="Silva D."/>
            <person name="Sinclair B."/>
            <person name="Sperling S."/>
            <person name="Stupka E."/>
            <person name="Sugiura K."/>
            <person name="Sultana R."/>
            <person name="Takenaka Y."/>
            <person name="Taki K."/>
            <person name="Tammoja K."/>
            <person name="Tan S.L."/>
            <person name="Tang S."/>
            <person name="Taylor M.S."/>
            <person name="Tegner J."/>
            <person name="Teichmann S.A."/>
            <person name="Ueda H.R."/>
            <person name="van Nimwegen E."/>
            <person name="Verardo R."/>
            <person name="Wei C.L."/>
            <person name="Yagi K."/>
            <person name="Yamanishi H."/>
            <person name="Zabarovsky E."/>
            <person name="Zhu S."/>
            <person name="Zimmer A."/>
            <person name="Hide W."/>
            <person name="Bult C."/>
            <person name="Grimmond S.M."/>
            <person name="Teasdale R.D."/>
            <person name="Liu E.T."/>
            <person name="Brusic V."/>
            <person name="Quackenbush J."/>
            <person name="Wahlestedt C."/>
            <person name="Mattick J.S."/>
            <person name="Hume D.A."/>
            <person name="Kai C."/>
            <person name="Sasaki D."/>
            <person name="Tomaru Y."/>
            <person name="Fukuda S."/>
            <person name="Kanamori-Katayama M."/>
            <person name="Suzuki M."/>
            <person name="Aoki J."/>
            <person name="Arakawa T."/>
            <person name="Iida J."/>
            <person name="Imamura K."/>
            <person name="Itoh M."/>
            <person name="Kato T."/>
            <person name="Kawaji H."/>
            <person name="Kawagashira N."/>
            <person name="Kawashima T."/>
            <person name="Kojima M."/>
            <person name="Kondo S."/>
            <person name="Konno H."/>
            <person name="Nakano K."/>
            <person name="Ninomiya N."/>
            <person name="Nishio T."/>
            <person name="Okada M."/>
            <person name="Plessy C."/>
            <person name="Shibata K."/>
            <person name="Shiraki T."/>
            <person name="Suzuki S."/>
            <person name="Tagami M."/>
            <person name="Waki K."/>
            <person name="Watahiki A."/>
            <person name="Okamura-Oho Y."/>
            <person name="Suzuki H."/>
            <person name="Kawai J."/>
            <person name="Hayashizaki Y."/>
        </authorList>
    </citation>
    <scope>NUCLEOTIDE SEQUENCE [LARGE SCALE MRNA]</scope>
    <source>
        <strain>C57BL/6J</strain>
        <tissue>Embryo</tissue>
    </source>
</reference>
<reference key="2">
    <citation type="journal article" date="2009" name="PLoS Biol.">
        <title>Lineage-specific biology revealed by a finished genome assembly of the mouse.</title>
        <authorList>
            <person name="Church D.M."/>
            <person name="Goodstadt L."/>
            <person name="Hillier L.W."/>
            <person name="Zody M.C."/>
            <person name="Goldstein S."/>
            <person name="She X."/>
            <person name="Bult C.J."/>
            <person name="Agarwala R."/>
            <person name="Cherry J.L."/>
            <person name="DiCuccio M."/>
            <person name="Hlavina W."/>
            <person name="Kapustin Y."/>
            <person name="Meric P."/>
            <person name="Maglott D."/>
            <person name="Birtle Z."/>
            <person name="Marques A.C."/>
            <person name="Graves T."/>
            <person name="Zhou S."/>
            <person name="Teague B."/>
            <person name="Potamousis K."/>
            <person name="Churas C."/>
            <person name="Place M."/>
            <person name="Herschleb J."/>
            <person name="Runnheim R."/>
            <person name="Forrest D."/>
            <person name="Amos-Landgraf J."/>
            <person name="Schwartz D.C."/>
            <person name="Cheng Z."/>
            <person name="Lindblad-Toh K."/>
            <person name="Eichler E.E."/>
            <person name="Ponting C.P."/>
        </authorList>
    </citation>
    <scope>NUCLEOTIDE SEQUENCE [LARGE SCALE GENOMIC DNA]</scope>
    <source>
        <strain>C57BL/6J</strain>
    </source>
</reference>
<reference evidence="10" key="3">
    <citation type="journal article" date="2015" name="J. Biol. Chem.">
        <title>Structure and membrane binding properties of the endosomal tetratricopeptide repeat (TPR) domain-containing sorting nexins SNX20 and SNX21.</title>
        <authorList>
            <person name="Clairfeuille T."/>
            <person name="Norwood S.J."/>
            <person name="Qi X."/>
            <person name="Teasdale R.D."/>
            <person name="Collins B.M."/>
        </authorList>
    </citation>
    <scope>X-RAY CRYSTALLOGRAPHY (2.40 ANGSTROMS) OF 230-363</scope>
    <scope>SUBUNIT</scope>
    <scope>SUBCELLULAR LOCATION</scope>
    <scope>DOMAIN</scope>
    <scope>MUTAGENESIS OF ARG-161</scope>
</reference>
<proteinExistence type="evidence at protein level"/>
<sequence>MASRLLHRLRHALASDGPGEAAAGPEAEQFPESSELEDDDAEGLSSRLSGTLSFTSAEDDPDDEDEDDEAGLDSPPSGDGASGEDAERSPPPDGQRSSQLLARQLQDFWKKSRNTLVPQRLLFEVTSANVVKDPPSKYVLYTLAVMGPGPPDRQPAQISRRYSDFERLHRNLQRQFRGPMSAISFPRKRLRRNFTAETIARRSRAFEQFLGHLQAVPELRQAPDLQDFFVLPELRRAQSLTCTGLYREALALWANAWQLQTQLGTPSGPDRPLLTLAGLAVCHQELEDPGEARACSEKALQLLGDKRPHPFLAPFLEAHVRLSWRLGLDKRQSEAQLQALQEAGLTSTPPPSLKELLIKEVLD</sequence>
<accession>Q3UR97</accession>